<reference key="1">
    <citation type="journal article" date="2007" name="J. Bacteriol.">
        <title>The complete genome sequence of Roseobacter denitrificans reveals a mixotrophic rather than photosynthetic metabolism.</title>
        <authorList>
            <person name="Swingley W.D."/>
            <person name="Sadekar S."/>
            <person name="Mastrian S.D."/>
            <person name="Matthies H.J."/>
            <person name="Hao J."/>
            <person name="Ramos H."/>
            <person name="Acharya C.R."/>
            <person name="Conrad A.L."/>
            <person name="Taylor H.L."/>
            <person name="Dejesa L.C."/>
            <person name="Shah M.K."/>
            <person name="O'Huallachain M.E."/>
            <person name="Lince M.T."/>
            <person name="Blankenship R.E."/>
            <person name="Beatty J.T."/>
            <person name="Touchman J.W."/>
        </authorList>
    </citation>
    <scope>NUCLEOTIDE SEQUENCE [LARGE SCALE GENOMIC DNA]</scope>
    <source>
        <strain>ATCC 33942 / OCh 114</strain>
    </source>
</reference>
<name>PNP_ROSDO</name>
<keyword id="KW-0963">Cytoplasm</keyword>
<keyword id="KW-0460">Magnesium</keyword>
<keyword id="KW-0479">Metal-binding</keyword>
<keyword id="KW-0548">Nucleotidyltransferase</keyword>
<keyword id="KW-1185">Reference proteome</keyword>
<keyword id="KW-0694">RNA-binding</keyword>
<keyword id="KW-0808">Transferase</keyword>
<protein>
    <recommendedName>
        <fullName evidence="1">Polyribonucleotide nucleotidyltransferase</fullName>
        <ecNumber evidence="1">2.7.7.8</ecNumber>
    </recommendedName>
    <alternativeName>
        <fullName evidence="1">Polynucleotide phosphorylase</fullName>
        <shortName evidence="1">PNPase</shortName>
    </alternativeName>
</protein>
<feature type="chain" id="PRO_0000329821" description="Polyribonucleotide nucleotidyltransferase">
    <location>
        <begin position="1"/>
        <end position="711"/>
    </location>
</feature>
<feature type="domain" description="KH" evidence="1">
    <location>
        <begin position="556"/>
        <end position="615"/>
    </location>
</feature>
<feature type="domain" description="S1 motif" evidence="1">
    <location>
        <begin position="625"/>
        <end position="693"/>
    </location>
</feature>
<feature type="binding site" evidence="1">
    <location>
        <position position="490"/>
    </location>
    <ligand>
        <name>Mg(2+)</name>
        <dbReference type="ChEBI" id="CHEBI:18420"/>
    </ligand>
</feature>
<feature type="binding site" evidence="1">
    <location>
        <position position="496"/>
    </location>
    <ligand>
        <name>Mg(2+)</name>
        <dbReference type="ChEBI" id="CHEBI:18420"/>
    </ligand>
</feature>
<dbReference type="EC" id="2.7.7.8" evidence="1"/>
<dbReference type="EMBL" id="CP000362">
    <property type="protein sequence ID" value="ABG30337.1"/>
    <property type="molecule type" value="Genomic_DNA"/>
</dbReference>
<dbReference type="RefSeq" id="WP_011566959.1">
    <property type="nucleotide sequence ID" value="NC_008209.1"/>
</dbReference>
<dbReference type="SMR" id="Q16CF6"/>
<dbReference type="STRING" id="375451.RD1_0637"/>
<dbReference type="KEGG" id="rde:RD1_0637"/>
<dbReference type="eggNOG" id="COG1185">
    <property type="taxonomic scope" value="Bacteria"/>
</dbReference>
<dbReference type="HOGENOM" id="CLU_004217_2_2_5"/>
<dbReference type="OrthoDB" id="9804305at2"/>
<dbReference type="Proteomes" id="UP000007029">
    <property type="component" value="Chromosome"/>
</dbReference>
<dbReference type="GO" id="GO:0005829">
    <property type="term" value="C:cytosol"/>
    <property type="evidence" value="ECO:0007669"/>
    <property type="project" value="TreeGrafter"/>
</dbReference>
<dbReference type="GO" id="GO:0000175">
    <property type="term" value="F:3'-5'-RNA exonuclease activity"/>
    <property type="evidence" value="ECO:0007669"/>
    <property type="project" value="TreeGrafter"/>
</dbReference>
<dbReference type="GO" id="GO:0000287">
    <property type="term" value="F:magnesium ion binding"/>
    <property type="evidence" value="ECO:0007669"/>
    <property type="project" value="UniProtKB-UniRule"/>
</dbReference>
<dbReference type="GO" id="GO:0004654">
    <property type="term" value="F:polyribonucleotide nucleotidyltransferase activity"/>
    <property type="evidence" value="ECO:0007669"/>
    <property type="project" value="UniProtKB-UniRule"/>
</dbReference>
<dbReference type="GO" id="GO:0003723">
    <property type="term" value="F:RNA binding"/>
    <property type="evidence" value="ECO:0007669"/>
    <property type="project" value="UniProtKB-UniRule"/>
</dbReference>
<dbReference type="GO" id="GO:0006402">
    <property type="term" value="P:mRNA catabolic process"/>
    <property type="evidence" value="ECO:0007669"/>
    <property type="project" value="UniProtKB-UniRule"/>
</dbReference>
<dbReference type="GO" id="GO:0006396">
    <property type="term" value="P:RNA processing"/>
    <property type="evidence" value="ECO:0007669"/>
    <property type="project" value="InterPro"/>
</dbReference>
<dbReference type="CDD" id="cd02393">
    <property type="entry name" value="KH-I_PNPase"/>
    <property type="match status" value="1"/>
</dbReference>
<dbReference type="CDD" id="cd11363">
    <property type="entry name" value="RNase_PH_PNPase_1"/>
    <property type="match status" value="1"/>
</dbReference>
<dbReference type="CDD" id="cd11364">
    <property type="entry name" value="RNase_PH_PNPase_2"/>
    <property type="match status" value="1"/>
</dbReference>
<dbReference type="CDD" id="cd04472">
    <property type="entry name" value="S1_PNPase"/>
    <property type="match status" value="1"/>
</dbReference>
<dbReference type="FunFam" id="2.40.50.140:FF:000107">
    <property type="entry name" value="Polyribonucleotide nucleotidyltransferase"/>
    <property type="match status" value="1"/>
</dbReference>
<dbReference type="FunFam" id="3.30.1370.10:FF:000001">
    <property type="entry name" value="Polyribonucleotide nucleotidyltransferase"/>
    <property type="match status" value="1"/>
</dbReference>
<dbReference type="FunFam" id="3.30.230.70:FF:000001">
    <property type="entry name" value="Polyribonucleotide nucleotidyltransferase"/>
    <property type="match status" value="1"/>
</dbReference>
<dbReference type="FunFam" id="3.30.230.70:FF:000002">
    <property type="entry name" value="Polyribonucleotide nucleotidyltransferase"/>
    <property type="match status" value="1"/>
</dbReference>
<dbReference type="Gene3D" id="3.30.230.70">
    <property type="entry name" value="GHMP Kinase, N-terminal domain"/>
    <property type="match status" value="2"/>
</dbReference>
<dbReference type="Gene3D" id="3.30.1370.10">
    <property type="entry name" value="K Homology domain, type 1"/>
    <property type="match status" value="1"/>
</dbReference>
<dbReference type="Gene3D" id="2.40.50.140">
    <property type="entry name" value="Nucleic acid-binding proteins"/>
    <property type="match status" value="1"/>
</dbReference>
<dbReference type="HAMAP" id="MF_01595">
    <property type="entry name" value="PNPase"/>
    <property type="match status" value="1"/>
</dbReference>
<dbReference type="InterPro" id="IPR001247">
    <property type="entry name" value="ExoRNase_PH_dom1"/>
</dbReference>
<dbReference type="InterPro" id="IPR015847">
    <property type="entry name" value="ExoRNase_PH_dom2"/>
</dbReference>
<dbReference type="InterPro" id="IPR036345">
    <property type="entry name" value="ExoRNase_PH_dom2_sf"/>
</dbReference>
<dbReference type="InterPro" id="IPR004087">
    <property type="entry name" value="KH_dom"/>
</dbReference>
<dbReference type="InterPro" id="IPR004088">
    <property type="entry name" value="KH_dom_type_1"/>
</dbReference>
<dbReference type="InterPro" id="IPR036612">
    <property type="entry name" value="KH_dom_type_1_sf"/>
</dbReference>
<dbReference type="InterPro" id="IPR012340">
    <property type="entry name" value="NA-bd_OB-fold"/>
</dbReference>
<dbReference type="InterPro" id="IPR012162">
    <property type="entry name" value="PNPase"/>
</dbReference>
<dbReference type="InterPro" id="IPR027408">
    <property type="entry name" value="PNPase/RNase_PH_dom_sf"/>
</dbReference>
<dbReference type="InterPro" id="IPR015848">
    <property type="entry name" value="PNPase_PH_RNA-bd_bac/org-type"/>
</dbReference>
<dbReference type="InterPro" id="IPR036456">
    <property type="entry name" value="PNPase_PH_RNA-bd_sf"/>
</dbReference>
<dbReference type="InterPro" id="IPR020568">
    <property type="entry name" value="Ribosomal_Su5_D2-typ_SF"/>
</dbReference>
<dbReference type="InterPro" id="IPR003029">
    <property type="entry name" value="S1_domain"/>
</dbReference>
<dbReference type="NCBIfam" id="TIGR03591">
    <property type="entry name" value="polynuc_phos"/>
    <property type="match status" value="1"/>
</dbReference>
<dbReference type="NCBIfam" id="NF008805">
    <property type="entry name" value="PRK11824.1"/>
    <property type="match status" value="1"/>
</dbReference>
<dbReference type="PANTHER" id="PTHR11252">
    <property type="entry name" value="POLYRIBONUCLEOTIDE NUCLEOTIDYLTRANSFERASE"/>
    <property type="match status" value="1"/>
</dbReference>
<dbReference type="PANTHER" id="PTHR11252:SF0">
    <property type="entry name" value="POLYRIBONUCLEOTIDE NUCLEOTIDYLTRANSFERASE 1, MITOCHONDRIAL"/>
    <property type="match status" value="1"/>
</dbReference>
<dbReference type="Pfam" id="PF00013">
    <property type="entry name" value="KH_1"/>
    <property type="match status" value="1"/>
</dbReference>
<dbReference type="Pfam" id="PF03726">
    <property type="entry name" value="PNPase"/>
    <property type="match status" value="1"/>
</dbReference>
<dbReference type="Pfam" id="PF01138">
    <property type="entry name" value="RNase_PH"/>
    <property type="match status" value="2"/>
</dbReference>
<dbReference type="Pfam" id="PF03725">
    <property type="entry name" value="RNase_PH_C"/>
    <property type="match status" value="2"/>
</dbReference>
<dbReference type="Pfam" id="PF00575">
    <property type="entry name" value="S1"/>
    <property type="match status" value="1"/>
</dbReference>
<dbReference type="PIRSF" id="PIRSF005499">
    <property type="entry name" value="PNPase"/>
    <property type="match status" value="1"/>
</dbReference>
<dbReference type="SMART" id="SM00322">
    <property type="entry name" value="KH"/>
    <property type="match status" value="1"/>
</dbReference>
<dbReference type="SMART" id="SM00316">
    <property type="entry name" value="S1"/>
    <property type="match status" value="1"/>
</dbReference>
<dbReference type="SUPFAM" id="SSF54791">
    <property type="entry name" value="Eukaryotic type KH-domain (KH-domain type I)"/>
    <property type="match status" value="1"/>
</dbReference>
<dbReference type="SUPFAM" id="SSF50249">
    <property type="entry name" value="Nucleic acid-binding proteins"/>
    <property type="match status" value="1"/>
</dbReference>
<dbReference type="SUPFAM" id="SSF46915">
    <property type="entry name" value="Polynucleotide phosphorylase/guanosine pentaphosphate synthase (PNPase/GPSI), domain 3"/>
    <property type="match status" value="1"/>
</dbReference>
<dbReference type="SUPFAM" id="SSF55666">
    <property type="entry name" value="Ribonuclease PH domain 2-like"/>
    <property type="match status" value="2"/>
</dbReference>
<dbReference type="SUPFAM" id="SSF54211">
    <property type="entry name" value="Ribosomal protein S5 domain 2-like"/>
    <property type="match status" value="2"/>
</dbReference>
<dbReference type="PROSITE" id="PS50084">
    <property type="entry name" value="KH_TYPE_1"/>
    <property type="match status" value="1"/>
</dbReference>
<dbReference type="PROSITE" id="PS50126">
    <property type="entry name" value="S1"/>
    <property type="match status" value="1"/>
</dbReference>
<gene>
    <name evidence="1" type="primary">pnp</name>
    <name type="ordered locus">RD1_0637</name>
</gene>
<organism>
    <name type="scientific">Roseobacter denitrificans (strain ATCC 33942 / OCh 114)</name>
    <name type="common">Erythrobacter sp. (strain OCh 114)</name>
    <name type="synonym">Roseobacter denitrificans</name>
    <dbReference type="NCBI Taxonomy" id="375451"/>
    <lineage>
        <taxon>Bacteria</taxon>
        <taxon>Pseudomonadati</taxon>
        <taxon>Pseudomonadota</taxon>
        <taxon>Alphaproteobacteria</taxon>
        <taxon>Rhodobacterales</taxon>
        <taxon>Roseobacteraceae</taxon>
        <taxon>Roseobacter</taxon>
    </lineage>
</organism>
<sequence>MFNETKKSIEWGEETLTLETGKVARQADGSVIATLGETSVMANVTFAKKQKPGQDFFPLTVHYQEKYYAAGKVPGGFFKREARPTEKETLTARLIDRPLRPLFVPGFKNEVLVMCTVLSHDLVNDPDMVAMIAASAALTISGAPFMGPIAGARVGFEDGEYILNPTVDDMQDLRLNPEQRLDLVVAGTKDAVMMVESEAYELSEAEMLGAVKFAHDAIQPVLDLIIDLAEDCAKEPFDFSPPDYSELSAAVKAAGETEMRAAFAISDKQERTTAVAAARETIMAALSDEQKEDPNLGSAMKGLEASILRGDVVKTGKRIDGRKTDEIRDIVCETGLLPRTHGSALFTRGETQGLVVTTLGTGDDEQFIDALHGNFKSNFLLHYNFPPYSVGEAGRVGPPGRREIGHGKLAWRALQAVLPAATDFPYTVRVVSEITESNGSSSMASVCGGSLSMMDAGVPLKAPVAGVAMGLILEEDGSYAILSDILGDEDHLGDMDFKVAGTEAGITSLQMDIKIAGITPEIMEKALEQAKAGRIHILGEMAKSITGAQDFSIHAPRIETMQIPTDKIREVIGSGGKVIREIVEVSGAKVDINDEGIIKIASPNGEAIKKAYDMIHSIVAEPEEGMVYTGTVVKIVDFGAFVNFFGKRDGLVHVSQIENRRLNHPSDVLKEGQEVKVKLLGFDDRGKVRLSMKVVDQETGEEIKKEEAPAD</sequence>
<evidence type="ECO:0000255" key="1">
    <source>
        <dbReference type="HAMAP-Rule" id="MF_01595"/>
    </source>
</evidence>
<accession>Q16CF6</accession>
<proteinExistence type="inferred from homology"/>
<comment type="function">
    <text evidence="1">Involved in mRNA degradation. Catalyzes the phosphorolysis of single-stranded polyribonucleotides processively in the 3'- to 5'-direction.</text>
</comment>
<comment type="catalytic activity">
    <reaction evidence="1">
        <text>RNA(n+1) + phosphate = RNA(n) + a ribonucleoside 5'-diphosphate</text>
        <dbReference type="Rhea" id="RHEA:22096"/>
        <dbReference type="Rhea" id="RHEA-COMP:14527"/>
        <dbReference type="Rhea" id="RHEA-COMP:17342"/>
        <dbReference type="ChEBI" id="CHEBI:43474"/>
        <dbReference type="ChEBI" id="CHEBI:57930"/>
        <dbReference type="ChEBI" id="CHEBI:140395"/>
        <dbReference type="EC" id="2.7.7.8"/>
    </reaction>
</comment>
<comment type="cofactor">
    <cofactor evidence="1">
        <name>Mg(2+)</name>
        <dbReference type="ChEBI" id="CHEBI:18420"/>
    </cofactor>
</comment>
<comment type="subcellular location">
    <subcellularLocation>
        <location evidence="1">Cytoplasm</location>
    </subcellularLocation>
</comment>
<comment type="similarity">
    <text evidence="1">Belongs to the polyribonucleotide nucleotidyltransferase family.</text>
</comment>